<organism>
    <name type="scientific">Aquila chrysaetos</name>
    <name type="common">Golden eagle</name>
    <dbReference type="NCBI Taxonomy" id="8962"/>
    <lineage>
        <taxon>Eukaryota</taxon>
        <taxon>Metazoa</taxon>
        <taxon>Chordata</taxon>
        <taxon>Craniata</taxon>
        <taxon>Vertebrata</taxon>
        <taxon>Euteleostomi</taxon>
        <taxon>Archelosauria</taxon>
        <taxon>Archosauria</taxon>
        <taxon>Dinosauria</taxon>
        <taxon>Saurischia</taxon>
        <taxon>Theropoda</taxon>
        <taxon>Coelurosauria</taxon>
        <taxon>Aves</taxon>
        <taxon>Neognathae</taxon>
        <taxon>Neoaves</taxon>
        <taxon>Telluraves</taxon>
        <taxon>Accipitrimorphae</taxon>
        <taxon>Accipitriformes</taxon>
        <taxon>Accipitridae</taxon>
        <taxon>Accipitrinae</taxon>
        <taxon>Aquila</taxon>
    </lineage>
</organism>
<gene>
    <name type="primary">HBB</name>
</gene>
<sequence>VHWTAEEKQLITGLWGKVNVADCGAEALARLLIVYPWTQRFFASFGNLSSPTAIIGNPMVRAHGKKVLTSFGEAVKNLDNIKNTFAQLSELHCDKLHVDPENFRLLGDILIIVLAAHFTKDFSPDCQAAWQKLVRAVAHALARKYH</sequence>
<evidence type="ECO:0000255" key="1">
    <source>
        <dbReference type="PROSITE-ProRule" id="PRU00238"/>
    </source>
</evidence>
<comment type="function">
    <text>Involved in oxygen transport from the lung to the various peripheral tissues.</text>
</comment>
<comment type="subunit">
    <text>Heterotetramer of two alpha chains and two beta chains.</text>
</comment>
<comment type="tissue specificity">
    <text>Red blood cells.</text>
</comment>
<comment type="similarity">
    <text evidence="1">Belongs to the globin family.</text>
</comment>
<dbReference type="PIR" id="A02442">
    <property type="entry name" value="HBQC"/>
</dbReference>
<dbReference type="SMR" id="P02122"/>
<dbReference type="GO" id="GO:0072562">
    <property type="term" value="C:blood microparticle"/>
    <property type="evidence" value="ECO:0007669"/>
    <property type="project" value="TreeGrafter"/>
</dbReference>
<dbReference type="GO" id="GO:0031838">
    <property type="term" value="C:haptoglobin-hemoglobin complex"/>
    <property type="evidence" value="ECO:0007669"/>
    <property type="project" value="TreeGrafter"/>
</dbReference>
<dbReference type="GO" id="GO:0005833">
    <property type="term" value="C:hemoglobin complex"/>
    <property type="evidence" value="ECO:0007669"/>
    <property type="project" value="InterPro"/>
</dbReference>
<dbReference type="GO" id="GO:0031720">
    <property type="term" value="F:haptoglobin binding"/>
    <property type="evidence" value="ECO:0007669"/>
    <property type="project" value="TreeGrafter"/>
</dbReference>
<dbReference type="GO" id="GO:0020037">
    <property type="term" value="F:heme binding"/>
    <property type="evidence" value="ECO:0007669"/>
    <property type="project" value="InterPro"/>
</dbReference>
<dbReference type="GO" id="GO:0046872">
    <property type="term" value="F:metal ion binding"/>
    <property type="evidence" value="ECO:0007669"/>
    <property type="project" value="UniProtKB-KW"/>
</dbReference>
<dbReference type="GO" id="GO:0043177">
    <property type="term" value="F:organic acid binding"/>
    <property type="evidence" value="ECO:0007669"/>
    <property type="project" value="TreeGrafter"/>
</dbReference>
<dbReference type="GO" id="GO:0019825">
    <property type="term" value="F:oxygen binding"/>
    <property type="evidence" value="ECO:0007669"/>
    <property type="project" value="InterPro"/>
</dbReference>
<dbReference type="GO" id="GO:0005344">
    <property type="term" value="F:oxygen carrier activity"/>
    <property type="evidence" value="ECO:0007669"/>
    <property type="project" value="UniProtKB-KW"/>
</dbReference>
<dbReference type="GO" id="GO:0004601">
    <property type="term" value="F:peroxidase activity"/>
    <property type="evidence" value="ECO:0007669"/>
    <property type="project" value="TreeGrafter"/>
</dbReference>
<dbReference type="GO" id="GO:0042744">
    <property type="term" value="P:hydrogen peroxide catabolic process"/>
    <property type="evidence" value="ECO:0007669"/>
    <property type="project" value="TreeGrafter"/>
</dbReference>
<dbReference type="CDD" id="cd08925">
    <property type="entry name" value="Hb-beta-like"/>
    <property type="match status" value="1"/>
</dbReference>
<dbReference type="FunFam" id="1.10.490.10:FF:000001">
    <property type="entry name" value="Hemoglobin subunit beta"/>
    <property type="match status" value="1"/>
</dbReference>
<dbReference type="Gene3D" id="1.10.490.10">
    <property type="entry name" value="Globins"/>
    <property type="match status" value="1"/>
</dbReference>
<dbReference type="InterPro" id="IPR000971">
    <property type="entry name" value="Globin"/>
</dbReference>
<dbReference type="InterPro" id="IPR009050">
    <property type="entry name" value="Globin-like_sf"/>
</dbReference>
<dbReference type="InterPro" id="IPR012292">
    <property type="entry name" value="Globin/Proto"/>
</dbReference>
<dbReference type="InterPro" id="IPR002337">
    <property type="entry name" value="Hemoglobin_b"/>
</dbReference>
<dbReference type="InterPro" id="IPR050056">
    <property type="entry name" value="Hemoglobin_oxygen_transport"/>
</dbReference>
<dbReference type="PANTHER" id="PTHR11442">
    <property type="entry name" value="HEMOGLOBIN FAMILY MEMBER"/>
    <property type="match status" value="1"/>
</dbReference>
<dbReference type="PANTHER" id="PTHR11442:SF7">
    <property type="entry name" value="HEMOGLOBIN SUBUNIT EPSILON"/>
    <property type="match status" value="1"/>
</dbReference>
<dbReference type="Pfam" id="PF00042">
    <property type="entry name" value="Globin"/>
    <property type="match status" value="1"/>
</dbReference>
<dbReference type="PRINTS" id="PR00814">
    <property type="entry name" value="BETAHAEM"/>
</dbReference>
<dbReference type="SUPFAM" id="SSF46458">
    <property type="entry name" value="Globin-like"/>
    <property type="match status" value="1"/>
</dbReference>
<dbReference type="PROSITE" id="PS01033">
    <property type="entry name" value="GLOBIN"/>
    <property type="match status" value="1"/>
</dbReference>
<protein>
    <recommendedName>
        <fullName>Hemoglobin subunit beta</fullName>
    </recommendedName>
    <alternativeName>
        <fullName>Beta-globin</fullName>
    </alternativeName>
    <alternativeName>
        <fullName>Hemoglobin beta chain</fullName>
    </alternativeName>
</protein>
<name>HBB_AQUCH</name>
<feature type="chain" id="PRO_0000052880" description="Hemoglobin subunit beta">
    <location>
        <begin position="1"/>
        <end position="146"/>
    </location>
</feature>
<feature type="domain" description="Globin" evidence="1">
    <location>
        <begin position="2"/>
        <end position="146"/>
    </location>
</feature>
<feature type="binding site" description="distal binding residue">
    <location>
        <position position="63"/>
    </location>
    <ligand>
        <name>heme b</name>
        <dbReference type="ChEBI" id="CHEBI:60344"/>
    </ligand>
    <ligandPart>
        <name>Fe</name>
        <dbReference type="ChEBI" id="CHEBI:18248"/>
    </ligandPart>
</feature>
<feature type="binding site" description="proximal binding residue">
    <location>
        <position position="92"/>
    </location>
    <ligand>
        <name>heme b</name>
        <dbReference type="ChEBI" id="CHEBI:60344"/>
    </ligand>
    <ligandPart>
        <name>Fe</name>
        <dbReference type="ChEBI" id="CHEBI:18248"/>
    </ligandPart>
</feature>
<keyword id="KW-0903">Direct protein sequencing</keyword>
<keyword id="KW-0349">Heme</keyword>
<keyword id="KW-0408">Iron</keyword>
<keyword id="KW-0479">Metal-binding</keyword>
<keyword id="KW-0561">Oxygen transport</keyword>
<keyword id="KW-0813">Transport</keyword>
<reference key="1">
    <citation type="journal article" date="1983" name="Hoppe-Seyler's Z. Physiol. Chem.">
        <title>Hemoglobin of the golden eagle (Aquila chrysaetos, Accipitriformes): amino acid sequence of the alpha A- and beta chains of the principal component.</title>
        <authorList>
            <person name="Oberthur W."/>
            <person name="Braunitzer G."/>
            <person name="Grimm F."/>
            <person name="Kosters J."/>
        </authorList>
    </citation>
    <scope>PROTEIN SEQUENCE</scope>
</reference>
<proteinExistence type="evidence at protein level"/>
<accession>P02122</accession>